<evidence type="ECO:0000255" key="1">
    <source>
        <dbReference type="HAMAP-Rule" id="MF_01333"/>
    </source>
</evidence>
<evidence type="ECO:0000305" key="2"/>
<sequence length="180" mass="20262">MAARLKERYDKQLRAELMKELGFANPMQAPRLEKIVVNMGLGEAINNGKIIDASVEQLAAITGQKPVVTRARKSIANFKLRQGQSIGAMVTLRGDRMYEFFDRLVSIALPRVRDFKGVSPKAFDGKGNYTLGVREQIIFPEINYDKVEKIKGLNITVVTTARNDEEGRALLRHLGMPFRQ</sequence>
<comment type="function">
    <text evidence="1">This is one of the proteins that bind and probably mediate the attachment of the 5S RNA into the large ribosomal subunit, where it forms part of the central protuberance. In the 70S ribosome it contacts protein S13 of the 30S subunit (bridge B1b), connecting the 2 subunits; this bridge is implicated in subunit movement. Contacts the P site tRNA; the 5S rRNA and some of its associated proteins might help stabilize positioning of ribosome-bound tRNAs.</text>
</comment>
<comment type="subunit">
    <text evidence="1">Part of the 50S ribosomal subunit; part of the 5S rRNA/L5/L18/L25 subcomplex. Contacts the 5S rRNA and the P site tRNA. Forms a bridge to the 30S subunit in the 70S ribosome.</text>
</comment>
<comment type="similarity">
    <text evidence="1">Belongs to the universal ribosomal protein uL5 family.</text>
</comment>
<protein>
    <recommendedName>
        <fullName evidence="1">Large ribosomal subunit protein uL5</fullName>
    </recommendedName>
    <alternativeName>
        <fullName evidence="2">50S ribosomal protein L5</fullName>
    </alternativeName>
</protein>
<organism>
    <name type="scientific">Anaeromyxobacter sp. (strain K)</name>
    <dbReference type="NCBI Taxonomy" id="447217"/>
    <lineage>
        <taxon>Bacteria</taxon>
        <taxon>Pseudomonadati</taxon>
        <taxon>Myxococcota</taxon>
        <taxon>Myxococcia</taxon>
        <taxon>Myxococcales</taxon>
        <taxon>Cystobacterineae</taxon>
        <taxon>Anaeromyxobacteraceae</taxon>
        <taxon>Anaeromyxobacter</taxon>
    </lineage>
</organism>
<feature type="chain" id="PRO_1000142349" description="Large ribosomal subunit protein uL5">
    <location>
        <begin position="1"/>
        <end position="180"/>
    </location>
</feature>
<gene>
    <name evidence="1" type="primary">rplE</name>
    <name type="ordered locus">AnaeK_1945</name>
</gene>
<keyword id="KW-0687">Ribonucleoprotein</keyword>
<keyword id="KW-0689">Ribosomal protein</keyword>
<keyword id="KW-0694">RNA-binding</keyword>
<keyword id="KW-0699">rRNA-binding</keyword>
<keyword id="KW-0820">tRNA-binding</keyword>
<dbReference type="EMBL" id="CP001131">
    <property type="protein sequence ID" value="ACG73173.1"/>
    <property type="molecule type" value="Genomic_DNA"/>
</dbReference>
<dbReference type="RefSeq" id="WP_011420988.1">
    <property type="nucleotide sequence ID" value="NC_011145.1"/>
</dbReference>
<dbReference type="SMR" id="B4UBB1"/>
<dbReference type="KEGG" id="ank:AnaeK_1945"/>
<dbReference type="HOGENOM" id="CLU_061015_2_1_7"/>
<dbReference type="OrthoDB" id="9806626at2"/>
<dbReference type="Proteomes" id="UP000001871">
    <property type="component" value="Chromosome"/>
</dbReference>
<dbReference type="GO" id="GO:1990904">
    <property type="term" value="C:ribonucleoprotein complex"/>
    <property type="evidence" value="ECO:0007669"/>
    <property type="project" value="UniProtKB-KW"/>
</dbReference>
<dbReference type="GO" id="GO:0005840">
    <property type="term" value="C:ribosome"/>
    <property type="evidence" value="ECO:0007669"/>
    <property type="project" value="UniProtKB-KW"/>
</dbReference>
<dbReference type="GO" id="GO:0019843">
    <property type="term" value="F:rRNA binding"/>
    <property type="evidence" value="ECO:0007669"/>
    <property type="project" value="UniProtKB-UniRule"/>
</dbReference>
<dbReference type="GO" id="GO:0003735">
    <property type="term" value="F:structural constituent of ribosome"/>
    <property type="evidence" value="ECO:0007669"/>
    <property type="project" value="InterPro"/>
</dbReference>
<dbReference type="GO" id="GO:0000049">
    <property type="term" value="F:tRNA binding"/>
    <property type="evidence" value="ECO:0007669"/>
    <property type="project" value="UniProtKB-UniRule"/>
</dbReference>
<dbReference type="GO" id="GO:0006412">
    <property type="term" value="P:translation"/>
    <property type="evidence" value="ECO:0007669"/>
    <property type="project" value="UniProtKB-UniRule"/>
</dbReference>
<dbReference type="FunFam" id="3.30.1440.10:FF:000001">
    <property type="entry name" value="50S ribosomal protein L5"/>
    <property type="match status" value="1"/>
</dbReference>
<dbReference type="Gene3D" id="3.30.1440.10">
    <property type="match status" value="1"/>
</dbReference>
<dbReference type="HAMAP" id="MF_01333_B">
    <property type="entry name" value="Ribosomal_uL5_B"/>
    <property type="match status" value="1"/>
</dbReference>
<dbReference type="InterPro" id="IPR002132">
    <property type="entry name" value="Ribosomal_uL5"/>
</dbReference>
<dbReference type="InterPro" id="IPR020930">
    <property type="entry name" value="Ribosomal_uL5_bac-type"/>
</dbReference>
<dbReference type="InterPro" id="IPR031309">
    <property type="entry name" value="Ribosomal_uL5_C"/>
</dbReference>
<dbReference type="InterPro" id="IPR020929">
    <property type="entry name" value="Ribosomal_uL5_CS"/>
</dbReference>
<dbReference type="InterPro" id="IPR022803">
    <property type="entry name" value="Ribosomal_uL5_dom_sf"/>
</dbReference>
<dbReference type="InterPro" id="IPR031310">
    <property type="entry name" value="Ribosomal_uL5_N"/>
</dbReference>
<dbReference type="NCBIfam" id="NF000585">
    <property type="entry name" value="PRK00010.1"/>
    <property type="match status" value="1"/>
</dbReference>
<dbReference type="PANTHER" id="PTHR11994">
    <property type="entry name" value="60S RIBOSOMAL PROTEIN L11-RELATED"/>
    <property type="match status" value="1"/>
</dbReference>
<dbReference type="Pfam" id="PF00281">
    <property type="entry name" value="Ribosomal_L5"/>
    <property type="match status" value="1"/>
</dbReference>
<dbReference type="Pfam" id="PF00673">
    <property type="entry name" value="Ribosomal_L5_C"/>
    <property type="match status" value="1"/>
</dbReference>
<dbReference type="PIRSF" id="PIRSF002161">
    <property type="entry name" value="Ribosomal_L5"/>
    <property type="match status" value="1"/>
</dbReference>
<dbReference type="SUPFAM" id="SSF55282">
    <property type="entry name" value="RL5-like"/>
    <property type="match status" value="1"/>
</dbReference>
<dbReference type="PROSITE" id="PS00358">
    <property type="entry name" value="RIBOSOMAL_L5"/>
    <property type="match status" value="1"/>
</dbReference>
<name>RL5_ANASK</name>
<proteinExistence type="inferred from homology"/>
<accession>B4UBB1</accession>
<reference key="1">
    <citation type="submission" date="2008-08" db="EMBL/GenBank/DDBJ databases">
        <title>Complete sequence of Anaeromyxobacter sp. K.</title>
        <authorList>
            <consortium name="US DOE Joint Genome Institute"/>
            <person name="Lucas S."/>
            <person name="Copeland A."/>
            <person name="Lapidus A."/>
            <person name="Glavina del Rio T."/>
            <person name="Dalin E."/>
            <person name="Tice H."/>
            <person name="Bruce D."/>
            <person name="Goodwin L."/>
            <person name="Pitluck S."/>
            <person name="Saunders E."/>
            <person name="Brettin T."/>
            <person name="Detter J.C."/>
            <person name="Han C."/>
            <person name="Larimer F."/>
            <person name="Land M."/>
            <person name="Hauser L."/>
            <person name="Kyrpides N."/>
            <person name="Ovchinnikiva G."/>
            <person name="Beliaev A."/>
        </authorList>
    </citation>
    <scope>NUCLEOTIDE SEQUENCE [LARGE SCALE GENOMIC DNA]</scope>
    <source>
        <strain>K</strain>
    </source>
</reference>